<keyword id="KW-1015">Disulfide bond</keyword>
<keyword id="KW-0964">Secreted</keyword>
<keyword id="KW-0732">Signal</keyword>
<dbReference type="EMBL" id="EF179404">
    <property type="protein sequence ID" value="ABM55410.1"/>
    <property type="molecule type" value="mRNA"/>
</dbReference>
<dbReference type="GO" id="GO:0005576">
    <property type="term" value="C:extracellular region"/>
    <property type="evidence" value="ECO:0007669"/>
    <property type="project" value="UniProtKB-SubCell"/>
</dbReference>
<dbReference type="GO" id="GO:0016791">
    <property type="term" value="F:phosphatase activity"/>
    <property type="evidence" value="ECO:0007669"/>
    <property type="project" value="UniProtKB-ARBA"/>
</dbReference>
<dbReference type="Gene3D" id="3.40.50.1240">
    <property type="entry name" value="Phosphoglycerate mutase-like"/>
    <property type="match status" value="1"/>
</dbReference>
<dbReference type="InterPro" id="IPR000560">
    <property type="entry name" value="His_Pase_clade-2"/>
</dbReference>
<dbReference type="InterPro" id="IPR029033">
    <property type="entry name" value="His_PPase_superfam"/>
</dbReference>
<dbReference type="Pfam" id="PF00328">
    <property type="entry name" value="His_Phos_2"/>
    <property type="match status" value="1"/>
</dbReference>
<dbReference type="SUPFAM" id="SSF53254">
    <property type="entry name" value="Phosphoglycerate mutase-like"/>
    <property type="match status" value="1"/>
</dbReference>
<evidence type="ECO:0000250" key="1">
    <source>
        <dbReference type="UniProtKB" id="A2IA89"/>
    </source>
</evidence>
<evidence type="ECO:0000255" key="2"/>
<evidence type="ECO:0000269" key="3">
    <source>
    </source>
</evidence>
<evidence type="ECO:0000303" key="4">
    <source>
    </source>
</evidence>
<evidence type="ECO:0000305" key="5"/>
<evidence type="ECO:0000312" key="6">
    <source>
        <dbReference type="EMBL" id="ABM55410.1"/>
    </source>
</evidence>
<organism>
    <name type="scientific">Xenopsylla cheopis</name>
    <name type="common">Oriental rat flea</name>
    <name type="synonym">Pulex cheopis</name>
    <dbReference type="NCBI Taxonomy" id="163159"/>
    <lineage>
        <taxon>Eukaryota</taxon>
        <taxon>Metazoa</taxon>
        <taxon>Ecdysozoa</taxon>
        <taxon>Arthropoda</taxon>
        <taxon>Hexapoda</taxon>
        <taxon>Insecta</taxon>
        <taxon>Pterygota</taxon>
        <taxon>Neoptera</taxon>
        <taxon>Endopterygota</taxon>
        <taxon>Siphonaptera</taxon>
        <taxon>Pulicidae</taxon>
        <taxon>Xenopsyllinae</taxon>
        <taxon>Xenopsylla</taxon>
    </lineage>
</organism>
<reference evidence="6" key="1">
    <citation type="journal article" date="2007" name="BMC Genomics">
        <title>An insight into the sialome of the oriental rat flea, Xenopsylla cheopis (Rots).</title>
        <authorList>
            <person name="Andersen J.F."/>
            <person name="Hinnebusch B.J."/>
            <person name="Lucas D.A."/>
            <person name="Conrads T.P."/>
            <person name="Veenstra T.D."/>
            <person name="Pham V.M."/>
            <person name="Ribeiro J.M."/>
        </authorList>
    </citation>
    <scope>NUCLEOTIDE SEQUENCE [LARGE SCALE MRNA]</scope>
    <source>
        <tissue evidence="6">Salivary gland</tissue>
    </source>
</reference>
<reference evidence="5" key="2">
    <citation type="journal article" date="2023" name="Commun. Biol.">
        <title>Acid phosphatase-like proteins, a biogenic amine and leukotriene-binding salivary protein family from the flea Xenopsylla cheopis.</title>
        <authorList>
            <person name="Lu S."/>
            <person name="Andersen J.F."/>
            <person name="Bosio C.F."/>
            <person name="Hinnebusch B.J."/>
            <person name="Ribeiro J.M."/>
        </authorList>
    </citation>
    <scope>FUNCTION</scope>
    <scope>DOMAIN</scope>
    <scope>CAUTION</scope>
</reference>
<accession>A2IA90</accession>
<comment type="function">
    <text evidence="3 5">Probably modulates blood feeding of fleas on vertebrate species by binding and sequestering different mediators involved in the host response (Probable). Binds histamine (PubMed:38110569). Binds leukotriene C4 (PubMed:38110569). Does not bind serotonin, adrenaline, noradrenaline, leukotriene B4, leukotriene D4, leukotriene E4, ADP, and stable analogs of thromboxane A2: U-46619 and cTXA2 (PubMed:38110569).</text>
</comment>
<comment type="subcellular location">
    <subcellularLocation>
        <location evidence="5">Secreted</location>
    </subcellularLocation>
</comment>
<comment type="domain">
    <text evidence="3">Lipids and biogenic amines bind independently through different binding pockets.</text>
</comment>
<comment type="similarity">
    <text evidence="5">Belongs to the histidine acid phosphatase family.</text>
</comment>
<comment type="caution">
    <text evidence="3">Lacks acid phosphatase catalytic activity.</text>
</comment>
<name>XCAP3_XENCH</name>
<proteinExistence type="evidence at transcript level"/>
<protein>
    <recommendedName>
        <fullName evidence="4">Acid phosphatase-like protein XcAP-3</fullName>
        <shortName evidence="4">XcAP-3</shortName>
    </recommendedName>
</protein>
<feature type="signal peptide" evidence="2">
    <location>
        <begin position="1"/>
        <end position="19"/>
    </location>
</feature>
<feature type="chain" id="PRO_5002644531" description="Acid phosphatase-like protein XcAP-3" evidence="2">
    <location>
        <begin position="20"/>
        <end position="380"/>
    </location>
</feature>
<feature type="disulfide bond" evidence="1">
    <location>
        <begin position="147"/>
        <end position="374"/>
    </location>
</feature>
<feature type="disulfide bond" evidence="1">
    <location>
        <begin position="167"/>
        <end position="221"/>
    </location>
</feature>
<feature type="disulfide bond" evidence="1">
    <location>
        <begin position="347"/>
        <end position="351"/>
    </location>
</feature>
<sequence length="380" mass="42711">MKATILLFLVLAVVQLSTAAEQLKFVFVTVRGADYEVCDIPGGPKITNKDGKDSKLTEEGKNTVYQLGVKVSELYKSKLGVSKWDSSKNYWPIATNSRRSQISTLITGAGLEGDQSKRDKSWTDEELKKTSFPAMLQFWKFIDPAKCPKFFKEVSQQPEIATTLQDCASQMQEVKKHYDTVDPTKPQHVWLTYETLKKMKKQQPSKVEWASDDMMKKLRECSAKLNWLATTKTDTLRKLSGGLILSDILNDMKEITQGKAQPHATGGTSNKLSLFTTPQGLLIAKLAVFMPPGATLDGKVPTSSEVYPESGATMNTEMYEDNGTWKVKLIYYEGKDYPGKTIKLPGCEEKCPFQQFQQILTKYAVNEQEHETLCKSAQWP</sequence>